<reference key="1">
    <citation type="journal article" date="2006" name="PLoS Genet.">
        <title>The complete genome sequence and comparative genome analysis of the high pathogenicity Yersinia enterocolitica strain 8081.</title>
        <authorList>
            <person name="Thomson N.R."/>
            <person name="Howard S."/>
            <person name="Wren B.W."/>
            <person name="Holden M.T.G."/>
            <person name="Crossman L."/>
            <person name="Challis G.L."/>
            <person name="Churcher C."/>
            <person name="Mungall K."/>
            <person name="Brooks K."/>
            <person name="Chillingworth T."/>
            <person name="Feltwell T."/>
            <person name="Abdellah Z."/>
            <person name="Hauser H."/>
            <person name="Jagels K."/>
            <person name="Maddison M."/>
            <person name="Moule S."/>
            <person name="Sanders M."/>
            <person name="Whitehead S."/>
            <person name="Quail M.A."/>
            <person name="Dougan G."/>
            <person name="Parkhill J."/>
            <person name="Prentice M.B."/>
        </authorList>
    </citation>
    <scope>NUCLEOTIDE SEQUENCE [LARGE SCALE GENOMIC DNA]</scope>
    <source>
        <strain>NCTC 13174 / 8081</strain>
    </source>
</reference>
<sequence>MNASDLIRIMQFGDSVLPVGAFTFSNGVESAIQTGVVRDVPTLKGFVLTALKQAASCDGMGVVAAHRAVVADDRDGIIRADWAVNNRKLNEESRLMATRMGKKLAEMSIHVVEHPLISWWLEQIKNGNTAGTYPVTQAVVMAAQGIGQREVVVMHQYGVAMTILSAAMRLMRVTHFDTQHILFELNHDIEKFCDIAEIGDIDQMSSYVPIVDVLAAVHVKAHVRLFSN</sequence>
<organism>
    <name type="scientific">Yersinia enterocolitica serotype O:8 / biotype 1B (strain NCTC 13174 / 8081)</name>
    <dbReference type="NCBI Taxonomy" id="393305"/>
    <lineage>
        <taxon>Bacteria</taxon>
        <taxon>Pseudomonadati</taxon>
        <taxon>Pseudomonadota</taxon>
        <taxon>Gammaproteobacteria</taxon>
        <taxon>Enterobacterales</taxon>
        <taxon>Yersiniaceae</taxon>
        <taxon>Yersinia</taxon>
    </lineage>
</organism>
<proteinExistence type="inferred from homology"/>
<name>UREF_YERE8</name>
<dbReference type="EMBL" id="AM286415">
    <property type="protein sequence ID" value="CAL11053.1"/>
    <property type="molecule type" value="Genomic_DNA"/>
</dbReference>
<dbReference type="RefSeq" id="WP_005164256.1">
    <property type="nucleotide sequence ID" value="NC_008800.1"/>
</dbReference>
<dbReference type="RefSeq" id="YP_001005289.1">
    <property type="nucleotide sequence ID" value="NC_008800.1"/>
</dbReference>
<dbReference type="SMR" id="A1JKE1"/>
<dbReference type="KEGG" id="yen:YE0955"/>
<dbReference type="PATRIC" id="fig|393305.7.peg.1056"/>
<dbReference type="eggNOG" id="COG0830">
    <property type="taxonomic scope" value="Bacteria"/>
</dbReference>
<dbReference type="HOGENOM" id="CLU_049215_4_0_6"/>
<dbReference type="OrthoDB" id="9798772at2"/>
<dbReference type="Proteomes" id="UP000000642">
    <property type="component" value="Chromosome"/>
</dbReference>
<dbReference type="GO" id="GO:0005737">
    <property type="term" value="C:cytoplasm"/>
    <property type="evidence" value="ECO:0007669"/>
    <property type="project" value="UniProtKB-SubCell"/>
</dbReference>
<dbReference type="GO" id="GO:0016151">
    <property type="term" value="F:nickel cation binding"/>
    <property type="evidence" value="ECO:0007669"/>
    <property type="project" value="UniProtKB-UniRule"/>
</dbReference>
<dbReference type="Gene3D" id="1.10.4190.10">
    <property type="entry name" value="Urease accessory protein UreF"/>
    <property type="match status" value="1"/>
</dbReference>
<dbReference type="HAMAP" id="MF_01385">
    <property type="entry name" value="UreF"/>
    <property type="match status" value="1"/>
</dbReference>
<dbReference type="InterPro" id="IPR002639">
    <property type="entry name" value="UreF"/>
</dbReference>
<dbReference type="InterPro" id="IPR038277">
    <property type="entry name" value="UreF_sf"/>
</dbReference>
<dbReference type="PANTHER" id="PTHR33620">
    <property type="entry name" value="UREASE ACCESSORY PROTEIN F"/>
    <property type="match status" value="1"/>
</dbReference>
<dbReference type="PANTHER" id="PTHR33620:SF1">
    <property type="entry name" value="UREASE ACCESSORY PROTEIN F"/>
    <property type="match status" value="1"/>
</dbReference>
<dbReference type="Pfam" id="PF01730">
    <property type="entry name" value="UreF"/>
    <property type="match status" value="1"/>
</dbReference>
<dbReference type="PIRSF" id="PIRSF009467">
    <property type="entry name" value="Ureas_acces_UreF"/>
    <property type="match status" value="1"/>
</dbReference>
<gene>
    <name evidence="1" type="primary">ureF</name>
    <name type="ordered locus">YE0955</name>
</gene>
<evidence type="ECO:0000255" key="1">
    <source>
        <dbReference type="HAMAP-Rule" id="MF_01385"/>
    </source>
</evidence>
<comment type="function">
    <text evidence="1">Required for maturation of urease via the functional incorporation of the urease nickel metallocenter.</text>
</comment>
<comment type="subunit">
    <text evidence="1">UreD, UreF and UreG form a complex that acts as a GTP-hydrolysis-dependent molecular chaperone, activating the urease apoprotein by helping to assemble the nickel containing metallocenter of UreC. The UreE protein probably delivers the nickel.</text>
</comment>
<comment type="subcellular location">
    <subcellularLocation>
        <location evidence="1">Cytoplasm</location>
    </subcellularLocation>
</comment>
<comment type="similarity">
    <text evidence="1">Belongs to the UreF family.</text>
</comment>
<protein>
    <recommendedName>
        <fullName evidence="1">Urease accessory protein UreF</fullName>
    </recommendedName>
</protein>
<accession>A1JKE1</accession>
<feature type="chain" id="PRO_1000145145" description="Urease accessory protein UreF">
    <location>
        <begin position="1"/>
        <end position="228"/>
    </location>
</feature>
<keyword id="KW-0143">Chaperone</keyword>
<keyword id="KW-0963">Cytoplasm</keyword>
<keyword id="KW-0996">Nickel insertion</keyword>